<protein>
    <recommendedName>
        <fullName evidence="6">Xyloglucan glycosyltransferase 4</fullName>
        <ecNumber evidence="2">2.4.1.-</ecNumber>
    </recommendedName>
    <alternativeName>
        <fullName evidence="6">Cellulose synthase-like protein C4</fullName>
        <shortName evidence="6">AtCslC4</shortName>
    </alternativeName>
    <alternativeName>
        <fullName evidence="6">Xyloglucan synthase 4</fullName>
    </alternativeName>
</protein>
<accession>Q9LJP4</accession>
<keyword id="KW-0961">Cell wall biogenesis/degradation</keyword>
<keyword id="KW-0328">Glycosyltransferase</keyword>
<keyword id="KW-0333">Golgi apparatus</keyword>
<keyword id="KW-0472">Membrane</keyword>
<keyword id="KW-0597">Phosphoprotein</keyword>
<keyword id="KW-1185">Reference proteome</keyword>
<keyword id="KW-0808">Transferase</keyword>
<keyword id="KW-0812">Transmembrane</keyword>
<keyword id="KW-1133">Transmembrane helix</keyword>
<name>CSLC4_ARATH</name>
<proteinExistence type="evidence at protein level"/>
<evidence type="ECO:0000255" key="1"/>
<evidence type="ECO:0000269" key="2">
    <source>
    </source>
</evidence>
<evidence type="ECO:0000269" key="3">
    <source>
    </source>
</evidence>
<evidence type="ECO:0000269" key="4">
    <source>
    </source>
</evidence>
<evidence type="ECO:0000269" key="5">
    <source>
    </source>
</evidence>
<evidence type="ECO:0000303" key="6">
    <source>
    </source>
</evidence>
<evidence type="ECO:0000305" key="7"/>
<evidence type="ECO:0000305" key="8">
    <source>
    </source>
</evidence>
<evidence type="ECO:0000312" key="9">
    <source>
        <dbReference type="Araport" id="AT3G28180"/>
    </source>
</evidence>
<evidence type="ECO:0000312" key="10">
    <source>
        <dbReference type="EMBL" id="BAB01433.1"/>
    </source>
</evidence>
<evidence type="ECO:0007744" key="11">
    <source>
    </source>
</evidence>
<sequence length="673" mass="77516">MAPNSVAVTMEKPDNFSLLEINGSDPSSFPDKRKSISPKQFSWFLLLKAHRLISCLSWLVSSVKKRIAFSAKNINEEEDPKSRGKQMYRFIKACLVISIIALSIEIVAHFKKWNLDLINRPSWEVYGLVEWSYMAWLSFRSDYIAPLVISLSRFCTVLFLIQSLDRLVLCLGCFWIKFKKIEPKLTEESIDLEDPSSFPMVLIQIPMCNEREVYEQSIGAASQLDWPKDRILIQVLDDSDDPNLQLLIKEEVSVWAEKGVNIIYRHRLIRTGYKAGNLKSAMTCDYVKDYEFVTIFDADFTPNPDFLKKTVPHFKGNPELGLVQARWSFVNKDENLLTRLQNINLCFHFEVEQQVNGVFLNFFGFNGTAGVWRIKALEESGGWLERTTVEDMDIAVRAHLNGWKFIYLNDVEVTCELPESYEAYKKQQHRWHSGPMQLFRLCLPSIIKSKISVWKKANLIFLFFLLRKLILPFYSFTLFCIILPLTMFIPEAELPLWIICYVPIFISLLNILPSPKSFPFLVPYLLFENTMSITKFNAMISGLFQFGSAYEWVVTKKTGRSSESDLLAFAEKEEKLHRRNSESGLELLSKLKEQETNLVGQETVKKSLGGLMRPKNKKKTNMVFKKELGLAFLLLTAAARSFLSAHGLHFYFLLFQGLSFLVVGLDLIGEQIS</sequence>
<comment type="function">
    <text evidence="2 4 5">Beta-1,4-glucan synthase rather involved in the synthesis of the xyloglucan backbone than cellulose. Seems to work simultaneously with xyloglucan 6-xylosyltransferase. Xyloglucan is a noncellulosic polysaccharides of plant cell wall and consists of a glucan backbone substituted by xylose, galactose and fucose (PubMed:17488821, PubMed:32737163). Associates with other xyloglucan-synthesizing enzymes to form multiprotein complexes for xyloglucan synthesis in the Golgi (PubMed:25392066).</text>
</comment>
<comment type="subunit">
    <text evidence="3 4">Homodimer (PubMed:22665445). Interacts with XXT5 (PubMed:22665445). Interacts with FUT1, MUR3 and XLT2 (PubMed:25392066).</text>
</comment>
<comment type="subcellular location">
    <subcellularLocation>
        <location evidence="3 4 8">Golgi apparatus membrane</location>
        <topology evidence="8">Multi-pass membrane protein</topology>
    </subcellularLocation>
</comment>
<comment type="tissue specificity">
    <text evidence="5">Expressed in seedlings, roots, leaves, stems, flowers and seeds.</text>
</comment>
<comment type="disruption phenotype">
    <text evidence="5">Normal xyloglucan (XyG) levels (PubMed:32737163). Plants missing several xyloglucan synthases (e.g. CSLC4, CSLC5, CSLC6, CSLC8 and CSLC12) have no detectable XyG levels and several associated phenotypes including reduced stems height and leaves area, as well as shorter root hairs and reduced pollen tube formation ability (PubMed:32737163).</text>
</comment>
<comment type="similarity">
    <text evidence="7">Belongs to the glycosyltransferase 2 family. Plant cellulose synthase-like C subfamily.</text>
</comment>
<reference key="1">
    <citation type="journal article" date="2000" name="DNA Res.">
        <title>Structural analysis of Arabidopsis thaliana chromosome 3. II. Sequence features of the 4,251,695 bp regions covered by 90 P1, TAC and BAC clones.</title>
        <authorList>
            <person name="Kaneko T."/>
            <person name="Katoh T."/>
            <person name="Sato S."/>
            <person name="Nakamura Y."/>
            <person name="Asamizu E."/>
            <person name="Tabata S."/>
        </authorList>
    </citation>
    <scope>NUCLEOTIDE SEQUENCE [LARGE SCALE GENOMIC DNA]</scope>
    <source>
        <strain>cv. Columbia</strain>
    </source>
</reference>
<reference key="2">
    <citation type="journal article" date="2017" name="Plant J.">
        <title>Araport11: a complete reannotation of the Arabidopsis thaliana reference genome.</title>
        <authorList>
            <person name="Cheng C.Y."/>
            <person name="Krishnakumar V."/>
            <person name="Chan A.P."/>
            <person name="Thibaud-Nissen F."/>
            <person name="Schobel S."/>
            <person name="Town C.D."/>
        </authorList>
    </citation>
    <scope>GENOME REANNOTATION</scope>
    <source>
        <strain>cv. Columbia</strain>
    </source>
</reference>
<reference key="3">
    <citation type="journal article" date="2003" name="Science">
        <title>Empirical analysis of transcriptional activity in the Arabidopsis genome.</title>
        <authorList>
            <person name="Yamada K."/>
            <person name="Lim J."/>
            <person name="Dale J.M."/>
            <person name="Chen H."/>
            <person name="Shinn P."/>
            <person name="Palm C.J."/>
            <person name="Southwick A.M."/>
            <person name="Wu H.C."/>
            <person name="Kim C.J."/>
            <person name="Nguyen M."/>
            <person name="Pham P.K."/>
            <person name="Cheuk R.F."/>
            <person name="Karlin-Newmann G."/>
            <person name="Liu S.X."/>
            <person name="Lam B."/>
            <person name="Sakano H."/>
            <person name="Wu T."/>
            <person name="Yu G."/>
            <person name="Miranda M."/>
            <person name="Quach H.L."/>
            <person name="Tripp M."/>
            <person name="Chang C.H."/>
            <person name="Lee J.M."/>
            <person name="Toriumi M.J."/>
            <person name="Chan M.M."/>
            <person name="Tang C.C."/>
            <person name="Onodera C.S."/>
            <person name="Deng J.M."/>
            <person name="Akiyama K."/>
            <person name="Ansari Y."/>
            <person name="Arakawa T."/>
            <person name="Banh J."/>
            <person name="Banno F."/>
            <person name="Bowser L."/>
            <person name="Brooks S.Y."/>
            <person name="Carninci P."/>
            <person name="Chao Q."/>
            <person name="Choy N."/>
            <person name="Enju A."/>
            <person name="Goldsmith A.D."/>
            <person name="Gurjal M."/>
            <person name="Hansen N.F."/>
            <person name="Hayashizaki Y."/>
            <person name="Johnson-Hopson C."/>
            <person name="Hsuan V.W."/>
            <person name="Iida K."/>
            <person name="Karnes M."/>
            <person name="Khan S."/>
            <person name="Koesema E."/>
            <person name="Ishida J."/>
            <person name="Jiang P.X."/>
            <person name="Jones T."/>
            <person name="Kawai J."/>
            <person name="Kamiya A."/>
            <person name="Meyers C."/>
            <person name="Nakajima M."/>
            <person name="Narusaka M."/>
            <person name="Seki M."/>
            <person name="Sakurai T."/>
            <person name="Satou M."/>
            <person name="Tamse R."/>
            <person name="Vaysberg M."/>
            <person name="Wallender E.K."/>
            <person name="Wong C."/>
            <person name="Yamamura Y."/>
            <person name="Yuan S."/>
            <person name="Shinozaki K."/>
            <person name="Davis R.W."/>
            <person name="Theologis A."/>
            <person name="Ecker J.R."/>
        </authorList>
    </citation>
    <scope>NUCLEOTIDE SEQUENCE [LARGE SCALE MRNA]</scope>
    <source>
        <strain>cv. Columbia</strain>
    </source>
</reference>
<reference key="4">
    <citation type="journal article" date="2000" name="Plant Physiol.">
        <title>The cellulose synthase superfamily.</title>
        <authorList>
            <person name="Richmond T.A."/>
            <person name="Somerville C.R."/>
        </authorList>
    </citation>
    <scope>GENE FAMILY</scope>
    <scope>NOMENCLATURE</scope>
</reference>
<reference key="5">
    <citation type="journal article" date="2007" name="Proc. Natl. Acad. Sci. U.S.A.">
        <title>A gene from the cellulose synthase-like C family encodes a beta-1,4 glucan synthase.</title>
        <authorList>
            <person name="Cocuron J.-C."/>
            <person name="Lerouxel O."/>
            <person name="Drakakaki G."/>
            <person name="Alonso A.P."/>
            <person name="Liepman A.H."/>
            <person name="Keegstra K."/>
            <person name="Raikhel N."/>
            <person name="Wilkerson C.G."/>
        </authorList>
    </citation>
    <scope>FUNCTION</scope>
    <scope>SUBCELLULAR LOCATION</scope>
</reference>
<reference key="6">
    <citation type="journal article" date="2009" name="Plant Physiol.">
        <title>Large-scale Arabidopsis phosphoproteome profiling reveals novel chloroplast kinase substrates and phosphorylation networks.</title>
        <authorList>
            <person name="Reiland S."/>
            <person name="Messerli G."/>
            <person name="Baerenfaller K."/>
            <person name="Gerrits B."/>
            <person name="Endler A."/>
            <person name="Grossmann J."/>
            <person name="Gruissem W."/>
            <person name="Baginsky S."/>
        </authorList>
    </citation>
    <scope>PHOSPHORYLATION [LARGE SCALE ANALYSIS] AT SER-581</scope>
    <scope>IDENTIFICATION BY MASS SPECTROMETRY [LARGE SCALE ANALYSIS]</scope>
</reference>
<reference key="7">
    <citation type="journal article" date="2012" name="Plant Physiol.">
        <title>Xyloglucan xylosyltransferases XXT1, XXT2, and XXT5 and the glucan synthase CSLC4 form Golgi-localized multiprotein complexes.</title>
        <authorList>
            <person name="Chou Y.H."/>
            <person name="Pogorelko G."/>
            <person name="Zabotina O.A."/>
        </authorList>
    </citation>
    <scope>INTERACTION WITH CSLC4 AND XXT5</scope>
    <scope>SUBCELLULAR LOCATION</scope>
</reference>
<reference key="8">
    <citation type="journal article" date="2015" name="Plant Cell Physiol.">
        <title>Protein-protein interactions among xyloglucan-synthesizing enzymes and formation of Golgi-localized multiprotein complexes.</title>
        <authorList>
            <person name="Chou Y.H."/>
            <person name="Pogorelko G."/>
            <person name="Young Z.T."/>
            <person name="Zabotina O.A."/>
        </authorList>
    </citation>
    <scope>FUNCTION</scope>
    <scope>INTERACTION WITH FUT1; MUR3 AND XLT2</scope>
    <scope>SUBCELLULAR LOCATION</scope>
</reference>
<reference key="9">
    <citation type="journal article" date="2020" name="Proc. Natl. Acad. Sci. U.S.A.">
        <title>The synthesis of xyloglucan, an abundant plant cell wall polysaccharide, requires CSLC function.</title>
        <authorList>
            <person name="Kim S.-J."/>
            <person name="Chandrasekar B."/>
            <person name="Rea A.C."/>
            <person name="Danhof L."/>
            <person name="Zemelis-Durfee S."/>
            <person name="Thrower N."/>
            <person name="Shepard Z.S."/>
            <person name="Pauly M."/>
            <person name="Brandizzi F."/>
            <person name="Keegstra K."/>
        </authorList>
    </citation>
    <scope>FUNCTION</scope>
    <scope>DISRUPTION PHENOTYPE</scope>
    <scope>TISSUE SPECIFICITY</scope>
    <source>
        <strain>cv. Columbia</strain>
    </source>
</reference>
<feature type="chain" id="PRO_0000319341" description="Xyloglucan glycosyltransferase 4">
    <location>
        <begin position="1"/>
        <end position="673"/>
    </location>
</feature>
<feature type="transmembrane region" description="Helical" evidence="1">
    <location>
        <begin position="90"/>
        <end position="110"/>
    </location>
</feature>
<feature type="transmembrane region" description="Helical" evidence="1">
    <location>
        <begin position="144"/>
        <end position="164"/>
    </location>
</feature>
<feature type="transmembrane region" description="Helical" evidence="1">
    <location>
        <begin position="469"/>
        <end position="489"/>
    </location>
</feature>
<feature type="transmembrane region" description="Helical" evidence="1">
    <location>
        <begin position="494"/>
        <end position="514"/>
    </location>
</feature>
<feature type="transmembrane region" description="Helical" evidence="1">
    <location>
        <begin position="623"/>
        <end position="643"/>
    </location>
</feature>
<feature type="transmembrane region" description="Helical" evidence="1">
    <location>
        <begin position="648"/>
        <end position="668"/>
    </location>
</feature>
<feature type="active site" evidence="1">
    <location>
        <position position="238"/>
    </location>
</feature>
<feature type="active site" evidence="1">
    <location>
        <position position="391"/>
    </location>
</feature>
<feature type="binding site" evidence="1">
    <location>
        <position position="297"/>
    </location>
    <ligand>
        <name>substrate</name>
    </ligand>
</feature>
<feature type="binding site" evidence="1">
    <location>
        <position position="299"/>
    </location>
    <ligand>
        <name>substrate</name>
    </ligand>
</feature>
<feature type="modified residue" description="Phosphoserine" evidence="11">
    <location>
        <position position="581"/>
    </location>
</feature>
<gene>
    <name evidence="6" type="primary">CSLC4</name>
    <name evidence="9" type="ordered locus">At3g28180</name>
    <name evidence="10" type="ORF">MIG10.8</name>
</gene>
<dbReference type="EC" id="2.4.1.-" evidence="2"/>
<dbReference type="EMBL" id="AP000415">
    <property type="protein sequence ID" value="BAB01433.1"/>
    <property type="molecule type" value="Genomic_DNA"/>
</dbReference>
<dbReference type="EMBL" id="CP002686">
    <property type="protein sequence ID" value="AEE77412.1"/>
    <property type="molecule type" value="Genomic_DNA"/>
</dbReference>
<dbReference type="EMBL" id="AY056286">
    <property type="protein sequence ID" value="AAL07135.1"/>
    <property type="molecule type" value="mRNA"/>
</dbReference>
<dbReference type="EMBL" id="AY091433">
    <property type="protein sequence ID" value="AAM14372.1"/>
    <property type="molecule type" value="mRNA"/>
</dbReference>
<dbReference type="SMR" id="Q9LJP4"/>
<dbReference type="BioGRID" id="7773">
    <property type="interactions" value="6"/>
</dbReference>
<dbReference type="FunCoup" id="Q9LJP4">
    <property type="interactions" value="17"/>
</dbReference>
<dbReference type="IntAct" id="Q9LJP4">
    <property type="interactions" value="2"/>
</dbReference>
<dbReference type="STRING" id="3702.Q9LJP4"/>
<dbReference type="CAZy" id="GT2">
    <property type="family name" value="Glycosyltransferase Family 2"/>
</dbReference>
<dbReference type="iPTMnet" id="Q9LJP4"/>
<dbReference type="PaxDb" id="3702-AT3G28180.1"/>
<dbReference type="ProteomicsDB" id="220364"/>
<dbReference type="EnsemblPlants" id="AT3G28180.1">
    <property type="protein sequence ID" value="AT3G28180.1"/>
    <property type="gene ID" value="AT3G28180"/>
</dbReference>
<dbReference type="GeneID" id="822444"/>
<dbReference type="Gramene" id="AT3G28180.1">
    <property type="protein sequence ID" value="AT3G28180.1"/>
    <property type="gene ID" value="AT3G28180"/>
</dbReference>
<dbReference type="KEGG" id="ath:AT3G28180"/>
<dbReference type="Araport" id="AT3G28180"/>
<dbReference type="TAIR" id="AT3G28180">
    <property type="gene designation" value="CSLC04"/>
</dbReference>
<dbReference type="eggNOG" id="ENOG502QTBF">
    <property type="taxonomic scope" value="Eukaryota"/>
</dbReference>
<dbReference type="HOGENOM" id="CLU_012856_1_0_1"/>
<dbReference type="InParanoid" id="Q9LJP4"/>
<dbReference type="OMA" id="LLQWSYM"/>
<dbReference type="OrthoDB" id="72851at2759"/>
<dbReference type="PhylomeDB" id="Q9LJP4"/>
<dbReference type="BioCyc" id="ARA:AT3G28180-MONOMER"/>
<dbReference type="BioCyc" id="MetaCyc:AT3G28180-MONOMER"/>
<dbReference type="BRENDA" id="2.4.2.39">
    <property type="organism ID" value="399"/>
</dbReference>
<dbReference type="PRO" id="PR:Q9LJP4"/>
<dbReference type="Proteomes" id="UP000006548">
    <property type="component" value="Chromosome 3"/>
</dbReference>
<dbReference type="ExpressionAtlas" id="Q9LJP4">
    <property type="expression patterns" value="baseline and differential"/>
</dbReference>
<dbReference type="GO" id="GO:0005768">
    <property type="term" value="C:endosome"/>
    <property type="evidence" value="ECO:0007005"/>
    <property type="project" value="TAIR"/>
</dbReference>
<dbReference type="GO" id="GO:0005794">
    <property type="term" value="C:Golgi apparatus"/>
    <property type="evidence" value="ECO:0007005"/>
    <property type="project" value="TAIR"/>
</dbReference>
<dbReference type="GO" id="GO:0000139">
    <property type="term" value="C:Golgi membrane"/>
    <property type="evidence" value="ECO:0007669"/>
    <property type="project" value="UniProtKB-SubCell"/>
</dbReference>
<dbReference type="GO" id="GO:0000138">
    <property type="term" value="C:Golgi trans cisterna"/>
    <property type="evidence" value="ECO:0007005"/>
    <property type="project" value="TAIR"/>
</dbReference>
<dbReference type="GO" id="GO:0005802">
    <property type="term" value="C:trans-Golgi network"/>
    <property type="evidence" value="ECO:0007005"/>
    <property type="project" value="TAIR"/>
</dbReference>
<dbReference type="GO" id="GO:0016757">
    <property type="term" value="F:glycosyltransferase activity"/>
    <property type="evidence" value="ECO:0000315"/>
    <property type="project" value="UniProtKB"/>
</dbReference>
<dbReference type="GO" id="GO:0042803">
    <property type="term" value="F:protein homodimerization activity"/>
    <property type="evidence" value="ECO:0000353"/>
    <property type="project" value="UniProtKB"/>
</dbReference>
<dbReference type="GO" id="GO:0071555">
    <property type="term" value="P:cell wall organization"/>
    <property type="evidence" value="ECO:0000315"/>
    <property type="project" value="UniProtKB"/>
</dbReference>
<dbReference type="GO" id="GO:0099402">
    <property type="term" value="P:plant organ development"/>
    <property type="evidence" value="ECO:0000315"/>
    <property type="project" value="UniProtKB"/>
</dbReference>
<dbReference type="GO" id="GO:0048868">
    <property type="term" value="P:pollen tube development"/>
    <property type="evidence" value="ECO:0000315"/>
    <property type="project" value="UniProtKB"/>
</dbReference>
<dbReference type="FunFam" id="3.90.550.10:FF:000007">
    <property type="entry name" value="probable xyloglucan glycosyltransferase 5"/>
    <property type="match status" value="1"/>
</dbReference>
<dbReference type="Gene3D" id="3.90.550.10">
    <property type="entry name" value="Spore Coat Polysaccharide Biosynthesis Protein SpsA, Chain A"/>
    <property type="match status" value="1"/>
</dbReference>
<dbReference type="InterPro" id="IPR001173">
    <property type="entry name" value="Glyco_trans_2-like"/>
</dbReference>
<dbReference type="InterPro" id="IPR029044">
    <property type="entry name" value="Nucleotide-diphossugar_trans"/>
</dbReference>
<dbReference type="PANTHER" id="PTHR32044">
    <property type="entry name" value="GLUCOMANNAN 4-BETA-MANNOSYLTRANSFERASE 9"/>
    <property type="match status" value="1"/>
</dbReference>
<dbReference type="PANTHER" id="PTHR32044:SF11">
    <property type="entry name" value="XYLOGLUCAN GLYCOSYLTRANSFERASE 4"/>
    <property type="match status" value="1"/>
</dbReference>
<dbReference type="Pfam" id="PF13632">
    <property type="entry name" value="Glyco_trans_2_3"/>
    <property type="match status" value="1"/>
</dbReference>
<dbReference type="SUPFAM" id="SSF53448">
    <property type="entry name" value="Nucleotide-diphospho-sugar transferases"/>
    <property type="match status" value="1"/>
</dbReference>
<organism>
    <name type="scientific">Arabidopsis thaliana</name>
    <name type="common">Mouse-ear cress</name>
    <dbReference type="NCBI Taxonomy" id="3702"/>
    <lineage>
        <taxon>Eukaryota</taxon>
        <taxon>Viridiplantae</taxon>
        <taxon>Streptophyta</taxon>
        <taxon>Embryophyta</taxon>
        <taxon>Tracheophyta</taxon>
        <taxon>Spermatophyta</taxon>
        <taxon>Magnoliopsida</taxon>
        <taxon>eudicotyledons</taxon>
        <taxon>Gunneridae</taxon>
        <taxon>Pentapetalae</taxon>
        <taxon>rosids</taxon>
        <taxon>malvids</taxon>
        <taxon>Brassicales</taxon>
        <taxon>Brassicaceae</taxon>
        <taxon>Camelineae</taxon>
        <taxon>Arabidopsis</taxon>
    </lineage>
</organism>